<accession>P9WLK0</accession>
<accession>L0TBG3</accession>
<accession>Q10692</accession>
<dbReference type="EMBL" id="AE000516">
    <property type="protein sequence ID" value="AAK46428.1"/>
    <property type="molecule type" value="Genomic_DNA"/>
</dbReference>
<dbReference type="PIR" id="G70766">
    <property type="entry name" value="G70766"/>
</dbReference>
<dbReference type="KEGG" id="mtc:MT2146"/>
<dbReference type="HOGENOM" id="CLU_795741_0_0_11"/>
<dbReference type="Proteomes" id="UP000001020">
    <property type="component" value="Chromosome"/>
</dbReference>
<name>Y2084_MYCTO</name>
<sequence length="380" mass="41314">MPVSDDSSSAFDLICAEIERQLRGGELLMDAAAASELLLTVRYQLDTQPRPLVIVHGPLFQAVKAARAQVYGRLIQLRHARCEVLDERWQLRPTGQRDVRALLIDVLNVLLAAITAAGVERAYACAERRAMAAAVVAKNYRDALGVELQCNSVCRAAAEAIHALAHRTGATEDADCLPPVDVIHADVTRRMHGEVATDVVAAGELVIAARHLLDPMPRGELSYGPLHEGGNAARKSVYRRLVQLWQARRAVTDGDVDLRDARTLLTDLDSILREMRTAATIQQSGTAGDGGGGRRQDSRRRNGPRRPARRGTSRGRRCAPRVAIGWHTPIGDPLAVEGVEEIGASLPGRESTPSDDGGSLHPSGRPRRVHRRRWCGLGLC</sequence>
<organism>
    <name type="scientific">Mycobacterium tuberculosis (strain CDC 1551 / Oshkosh)</name>
    <dbReference type="NCBI Taxonomy" id="83331"/>
    <lineage>
        <taxon>Bacteria</taxon>
        <taxon>Bacillati</taxon>
        <taxon>Actinomycetota</taxon>
        <taxon>Actinomycetes</taxon>
        <taxon>Mycobacteriales</taxon>
        <taxon>Mycobacteriaceae</taxon>
        <taxon>Mycobacterium</taxon>
        <taxon>Mycobacterium tuberculosis complex</taxon>
    </lineage>
</organism>
<reference key="1">
    <citation type="journal article" date="2002" name="J. Bacteriol.">
        <title>Whole-genome comparison of Mycobacterium tuberculosis clinical and laboratory strains.</title>
        <authorList>
            <person name="Fleischmann R.D."/>
            <person name="Alland D."/>
            <person name="Eisen J.A."/>
            <person name="Carpenter L."/>
            <person name="White O."/>
            <person name="Peterson J.D."/>
            <person name="DeBoy R.T."/>
            <person name="Dodson R.J."/>
            <person name="Gwinn M.L."/>
            <person name="Haft D.H."/>
            <person name="Hickey E.K."/>
            <person name="Kolonay J.F."/>
            <person name="Nelson W.C."/>
            <person name="Umayam L.A."/>
            <person name="Ermolaeva M.D."/>
            <person name="Salzberg S.L."/>
            <person name="Delcher A."/>
            <person name="Utterback T.R."/>
            <person name="Weidman J.F."/>
            <person name="Khouri H.M."/>
            <person name="Gill J."/>
            <person name="Mikula A."/>
            <person name="Bishai W."/>
            <person name="Jacobs W.R. Jr."/>
            <person name="Venter J.C."/>
            <person name="Fraser C.M."/>
        </authorList>
    </citation>
    <scope>NUCLEOTIDE SEQUENCE [LARGE SCALE GENOMIC DNA]</scope>
    <source>
        <strain>CDC 1551 / Oshkosh</strain>
    </source>
</reference>
<feature type="chain" id="PRO_0000427465" description="Uncharacterized protein MT2146">
    <location>
        <begin position="1"/>
        <end position="380"/>
    </location>
</feature>
<feature type="region of interest" description="Disordered" evidence="1">
    <location>
        <begin position="278"/>
        <end position="323"/>
    </location>
</feature>
<feature type="region of interest" description="Disordered" evidence="1">
    <location>
        <begin position="345"/>
        <end position="368"/>
    </location>
</feature>
<feature type="compositionally biased region" description="Basic residues" evidence="1">
    <location>
        <begin position="301"/>
        <end position="319"/>
    </location>
</feature>
<gene>
    <name type="ordered locus">MT2146</name>
</gene>
<evidence type="ECO:0000256" key="1">
    <source>
        <dbReference type="SAM" id="MobiDB-lite"/>
    </source>
</evidence>
<keyword id="KW-1185">Reference proteome</keyword>
<protein>
    <recommendedName>
        <fullName>Uncharacterized protein MT2146</fullName>
    </recommendedName>
</protein>
<proteinExistence type="predicted"/>